<reference key="1">
    <citation type="journal article" date="2002" name="Proc. Natl. Acad. Sci. U.S.A.">
        <title>The genome sequence of the facultative intracellular pathogen Brucella melitensis.</title>
        <authorList>
            <person name="DelVecchio V.G."/>
            <person name="Kapatral V."/>
            <person name="Redkar R.J."/>
            <person name="Patra G."/>
            <person name="Mujer C."/>
            <person name="Los T."/>
            <person name="Ivanova N."/>
            <person name="Anderson I."/>
            <person name="Bhattacharyya A."/>
            <person name="Lykidis A."/>
            <person name="Reznik G."/>
            <person name="Jablonski L."/>
            <person name="Larsen N."/>
            <person name="D'Souza M."/>
            <person name="Bernal A."/>
            <person name="Mazur M."/>
            <person name="Goltsman E."/>
            <person name="Selkov E."/>
            <person name="Elzer P.H."/>
            <person name="Hagius S."/>
            <person name="O'Callaghan D."/>
            <person name="Letesson J.-J."/>
            <person name="Haselkorn R."/>
            <person name="Kyrpides N.C."/>
            <person name="Overbeek R."/>
        </authorList>
    </citation>
    <scope>NUCLEOTIDE SEQUENCE [LARGE SCALE GENOMIC DNA]</scope>
    <source>
        <strain>ATCC 23456 / CCUG 17765 / NCTC 10094 / 16M</strain>
    </source>
</reference>
<dbReference type="EC" id="6.3.5.5" evidence="1"/>
<dbReference type="EMBL" id="AE008917">
    <property type="protein sequence ID" value="AAL51707.1"/>
    <property type="status" value="ALT_INIT"/>
    <property type="molecule type" value="Genomic_DNA"/>
</dbReference>
<dbReference type="PIR" id="AH3317">
    <property type="entry name" value="AH3317"/>
</dbReference>
<dbReference type="RefSeq" id="WP_002964590.1">
    <property type="nucleotide sequence ID" value="NZ_GG703780.1"/>
</dbReference>
<dbReference type="SMR" id="Q8YIB8"/>
<dbReference type="GeneID" id="93016227"/>
<dbReference type="KEGG" id="bme:BMEI0526"/>
<dbReference type="KEGG" id="bmel:DK63_898"/>
<dbReference type="PATRIC" id="fig|224914.52.peg.942"/>
<dbReference type="eggNOG" id="COG0505">
    <property type="taxonomic scope" value="Bacteria"/>
</dbReference>
<dbReference type="PhylomeDB" id="Q8YIB8"/>
<dbReference type="UniPathway" id="UPA00068">
    <property type="reaction ID" value="UER00171"/>
</dbReference>
<dbReference type="UniPathway" id="UPA00070">
    <property type="reaction ID" value="UER00115"/>
</dbReference>
<dbReference type="Proteomes" id="UP000000419">
    <property type="component" value="Chromosome I"/>
</dbReference>
<dbReference type="GO" id="GO:0005524">
    <property type="term" value="F:ATP binding"/>
    <property type="evidence" value="ECO:0007669"/>
    <property type="project" value="UniProtKB-UniRule"/>
</dbReference>
<dbReference type="GO" id="GO:0004088">
    <property type="term" value="F:carbamoyl-phosphate synthase (glutamine-hydrolyzing) activity"/>
    <property type="evidence" value="ECO:0007669"/>
    <property type="project" value="UniProtKB-UniRule"/>
</dbReference>
<dbReference type="GO" id="GO:0004359">
    <property type="term" value="F:glutaminase activity"/>
    <property type="evidence" value="ECO:0007669"/>
    <property type="project" value="RHEA"/>
</dbReference>
<dbReference type="GO" id="GO:0006207">
    <property type="term" value="P:'de novo' pyrimidine nucleobase biosynthetic process"/>
    <property type="evidence" value="ECO:0007669"/>
    <property type="project" value="InterPro"/>
</dbReference>
<dbReference type="GO" id="GO:0044205">
    <property type="term" value="P:'de novo' UMP biosynthetic process"/>
    <property type="evidence" value="ECO:0007669"/>
    <property type="project" value="UniProtKB-UniRule"/>
</dbReference>
<dbReference type="GO" id="GO:0006541">
    <property type="term" value="P:glutamine metabolic process"/>
    <property type="evidence" value="ECO:0007669"/>
    <property type="project" value="InterPro"/>
</dbReference>
<dbReference type="GO" id="GO:0006526">
    <property type="term" value="P:L-arginine biosynthetic process"/>
    <property type="evidence" value="ECO:0007669"/>
    <property type="project" value="UniProtKB-UniRule"/>
</dbReference>
<dbReference type="CDD" id="cd01744">
    <property type="entry name" value="GATase1_CPSase"/>
    <property type="match status" value="1"/>
</dbReference>
<dbReference type="FunFam" id="3.50.30.20:FF:000001">
    <property type="entry name" value="Carbamoyl-phosphate synthase small chain"/>
    <property type="match status" value="1"/>
</dbReference>
<dbReference type="Gene3D" id="3.40.50.880">
    <property type="match status" value="1"/>
</dbReference>
<dbReference type="Gene3D" id="3.50.30.20">
    <property type="entry name" value="Carbamoyl-phosphate synthase small subunit, N-terminal domain"/>
    <property type="match status" value="1"/>
</dbReference>
<dbReference type="HAMAP" id="MF_01209">
    <property type="entry name" value="CPSase_S_chain"/>
    <property type="match status" value="1"/>
</dbReference>
<dbReference type="InterPro" id="IPR050472">
    <property type="entry name" value="Anth_synth/Amidotransfase"/>
</dbReference>
<dbReference type="InterPro" id="IPR006274">
    <property type="entry name" value="CarbamoylP_synth_ssu"/>
</dbReference>
<dbReference type="InterPro" id="IPR002474">
    <property type="entry name" value="CarbamoylP_synth_ssu_N"/>
</dbReference>
<dbReference type="InterPro" id="IPR036480">
    <property type="entry name" value="CarbP_synth_ssu_N_sf"/>
</dbReference>
<dbReference type="InterPro" id="IPR029062">
    <property type="entry name" value="Class_I_gatase-like"/>
</dbReference>
<dbReference type="InterPro" id="IPR035686">
    <property type="entry name" value="CPSase_GATase1"/>
</dbReference>
<dbReference type="InterPro" id="IPR017926">
    <property type="entry name" value="GATASE"/>
</dbReference>
<dbReference type="NCBIfam" id="TIGR01368">
    <property type="entry name" value="CPSaseIIsmall"/>
    <property type="match status" value="1"/>
</dbReference>
<dbReference type="NCBIfam" id="NF009475">
    <property type="entry name" value="PRK12838.1"/>
    <property type="match status" value="1"/>
</dbReference>
<dbReference type="PANTHER" id="PTHR43418:SF7">
    <property type="entry name" value="CARBAMOYL-PHOSPHATE SYNTHASE SMALL CHAIN"/>
    <property type="match status" value="1"/>
</dbReference>
<dbReference type="PANTHER" id="PTHR43418">
    <property type="entry name" value="MULTIFUNCTIONAL TRYPTOPHAN BIOSYNTHESIS PROTEIN-RELATED"/>
    <property type="match status" value="1"/>
</dbReference>
<dbReference type="Pfam" id="PF00988">
    <property type="entry name" value="CPSase_sm_chain"/>
    <property type="match status" value="1"/>
</dbReference>
<dbReference type="Pfam" id="PF00117">
    <property type="entry name" value="GATase"/>
    <property type="match status" value="1"/>
</dbReference>
<dbReference type="PRINTS" id="PR00097">
    <property type="entry name" value="ANTSNTHASEII"/>
</dbReference>
<dbReference type="PRINTS" id="PR00099">
    <property type="entry name" value="CPSGATASE"/>
</dbReference>
<dbReference type="PRINTS" id="PR00096">
    <property type="entry name" value="GATASE"/>
</dbReference>
<dbReference type="SMART" id="SM01097">
    <property type="entry name" value="CPSase_sm_chain"/>
    <property type="match status" value="1"/>
</dbReference>
<dbReference type="SUPFAM" id="SSF52021">
    <property type="entry name" value="Carbamoyl phosphate synthetase, small subunit N-terminal domain"/>
    <property type="match status" value="1"/>
</dbReference>
<dbReference type="SUPFAM" id="SSF52317">
    <property type="entry name" value="Class I glutamine amidotransferase-like"/>
    <property type="match status" value="1"/>
</dbReference>
<dbReference type="PROSITE" id="PS51273">
    <property type="entry name" value="GATASE_TYPE_1"/>
    <property type="match status" value="1"/>
</dbReference>
<proteinExistence type="inferred from homology"/>
<comment type="function">
    <text evidence="1">Small subunit of the glutamine-dependent carbamoyl phosphate synthetase (CPSase). CPSase catalyzes the formation of carbamoyl phosphate from the ammonia moiety of glutamine, carbonate, and phosphate donated by ATP, constituting the first step of 2 biosynthetic pathways, one leading to arginine and/or urea and the other to pyrimidine nucleotides. The small subunit (glutamine amidotransferase) binds and cleaves glutamine to supply the large subunit with the substrate ammonia.</text>
</comment>
<comment type="catalytic activity">
    <reaction evidence="1">
        <text>hydrogencarbonate + L-glutamine + 2 ATP + H2O = carbamoyl phosphate + L-glutamate + 2 ADP + phosphate + 2 H(+)</text>
        <dbReference type="Rhea" id="RHEA:18633"/>
        <dbReference type="ChEBI" id="CHEBI:15377"/>
        <dbReference type="ChEBI" id="CHEBI:15378"/>
        <dbReference type="ChEBI" id="CHEBI:17544"/>
        <dbReference type="ChEBI" id="CHEBI:29985"/>
        <dbReference type="ChEBI" id="CHEBI:30616"/>
        <dbReference type="ChEBI" id="CHEBI:43474"/>
        <dbReference type="ChEBI" id="CHEBI:58228"/>
        <dbReference type="ChEBI" id="CHEBI:58359"/>
        <dbReference type="ChEBI" id="CHEBI:456216"/>
        <dbReference type="EC" id="6.3.5.5"/>
    </reaction>
</comment>
<comment type="catalytic activity">
    <molecule>Carbamoyl phosphate synthase small chain</molecule>
    <reaction evidence="1">
        <text>L-glutamine + H2O = L-glutamate + NH4(+)</text>
        <dbReference type="Rhea" id="RHEA:15889"/>
        <dbReference type="ChEBI" id="CHEBI:15377"/>
        <dbReference type="ChEBI" id="CHEBI:28938"/>
        <dbReference type="ChEBI" id="CHEBI:29985"/>
        <dbReference type="ChEBI" id="CHEBI:58359"/>
    </reaction>
</comment>
<comment type="pathway">
    <text evidence="1">Amino-acid biosynthesis; L-arginine biosynthesis; carbamoyl phosphate from bicarbonate: step 1/1.</text>
</comment>
<comment type="pathway">
    <text evidence="1">Pyrimidine metabolism; UMP biosynthesis via de novo pathway; (S)-dihydroorotate from bicarbonate: step 1/3.</text>
</comment>
<comment type="subunit">
    <text evidence="1">Composed of two chains; the small (or glutamine) chain promotes the hydrolysis of glutamine to ammonia, which is used by the large (or ammonia) chain to synthesize carbamoyl phosphate. Tetramer of heterodimers (alpha,beta)4.</text>
</comment>
<comment type="similarity">
    <text evidence="1">Belongs to the CarA family.</text>
</comment>
<comment type="sequence caution" evidence="2">
    <conflict type="erroneous initiation">
        <sequence resource="EMBL-CDS" id="AAL51707"/>
    </conflict>
</comment>
<keyword id="KW-0028">Amino-acid biosynthesis</keyword>
<keyword id="KW-0055">Arginine biosynthesis</keyword>
<keyword id="KW-0067">ATP-binding</keyword>
<keyword id="KW-0315">Glutamine amidotransferase</keyword>
<keyword id="KW-0436">Ligase</keyword>
<keyword id="KW-0547">Nucleotide-binding</keyword>
<keyword id="KW-0665">Pyrimidine biosynthesis</keyword>
<organism>
    <name type="scientific">Brucella melitensis biotype 1 (strain ATCC 23456 / CCUG 17765 / NCTC 10094 / 16M)</name>
    <dbReference type="NCBI Taxonomy" id="224914"/>
    <lineage>
        <taxon>Bacteria</taxon>
        <taxon>Pseudomonadati</taxon>
        <taxon>Pseudomonadota</taxon>
        <taxon>Alphaproteobacteria</taxon>
        <taxon>Hyphomicrobiales</taxon>
        <taxon>Brucellaceae</taxon>
        <taxon>Brucella/Ochrobactrum group</taxon>
        <taxon>Brucella</taxon>
    </lineage>
</organism>
<name>CARA_BRUME</name>
<accession>Q8YIB8</accession>
<feature type="chain" id="PRO_0000112259" description="Carbamoyl phosphate synthase small chain">
    <location>
        <begin position="1"/>
        <end position="407"/>
    </location>
</feature>
<feature type="domain" description="Glutamine amidotransferase type-1" evidence="1">
    <location>
        <begin position="209"/>
        <end position="397"/>
    </location>
</feature>
<feature type="region of interest" description="CPSase" evidence="1">
    <location>
        <begin position="1"/>
        <end position="205"/>
    </location>
</feature>
<feature type="active site" description="Nucleophile" evidence="1">
    <location>
        <position position="286"/>
    </location>
</feature>
<feature type="active site" evidence="1">
    <location>
        <position position="370"/>
    </location>
</feature>
<feature type="active site" evidence="1">
    <location>
        <position position="372"/>
    </location>
</feature>
<feature type="binding site" evidence="1">
    <location>
        <position position="60"/>
    </location>
    <ligand>
        <name>L-glutamine</name>
        <dbReference type="ChEBI" id="CHEBI:58359"/>
    </ligand>
</feature>
<feature type="binding site" evidence="1">
    <location>
        <position position="257"/>
    </location>
    <ligand>
        <name>L-glutamine</name>
        <dbReference type="ChEBI" id="CHEBI:58359"/>
    </ligand>
</feature>
<feature type="binding site" evidence="1">
    <location>
        <position position="259"/>
    </location>
    <ligand>
        <name>L-glutamine</name>
        <dbReference type="ChEBI" id="CHEBI:58359"/>
    </ligand>
</feature>
<feature type="binding site" evidence="1">
    <location>
        <position position="287"/>
    </location>
    <ligand>
        <name>L-glutamine</name>
        <dbReference type="ChEBI" id="CHEBI:58359"/>
    </ligand>
</feature>
<feature type="binding site" evidence="1">
    <location>
        <position position="290"/>
    </location>
    <ligand>
        <name>L-glutamine</name>
        <dbReference type="ChEBI" id="CHEBI:58359"/>
    </ligand>
</feature>
<feature type="binding site" evidence="1">
    <location>
        <position position="328"/>
    </location>
    <ligand>
        <name>L-glutamine</name>
        <dbReference type="ChEBI" id="CHEBI:58359"/>
    </ligand>
</feature>
<feature type="binding site" evidence="1">
    <location>
        <position position="330"/>
    </location>
    <ligand>
        <name>L-glutamine</name>
        <dbReference type="ChEBI" id="CHEBI:58359"/>
    </ligand>
</feature>
<feature type="binding site" evidence="1">
    <location>
        <position position="331"/>
    </location>
    <ligand>
        <name>L-glutamine</name>
        <dbReference type="ChEBI" id="CHEBI:58359"/>
    </ligand>
</feature>
<gene>
    <name evidence="1" type="primary">carA</name>
    <name type="ordered locus">BMEI0526</name>
</gene>
<evidence type="ECO:0000255" key="1">
    <source>
        <dbReference type="HAMAP-Rule" id="MF_01209"/>
    </source>
</evidence>
<evidence type="ECO:0000305" key="2"/>
<sequence length="407" mass="43536">MTETTPKTAPWTVQKRTAVLVLADGTVIEGKGLGATGAVEAEVVFNTALTGYEEILTDPSYAGQIVTFTFPHIGNVGANAEDIEDLTPANRHGAVGAIFKADITAPSNFRAAKDLDSWLKHRGIIALAGIDTRALTALIRERGAQNAVIAHDPNGNFDLDALKARAANWCGLENLDLAKDVTIGQSLVWKELPWTLQDGYGEQDAPQYHVVALDFGVKRNILRLLTGLGAKVTVLPATATAEDVLAHNPDGVFLSNGPGDPAATGEYAVPTIGKLVETGIPLFGICLGHQMLALALGGRTEKMHQGHHGANHPVKDYTTGKVEIVSMNHGFAVDSDSLPENVEETHVSLFDGTNCGLRVVGKPVFSVQHHPEASPGPQDSHYLFRRFINLIRERKGQAPLPEREQAA</sequence>
<protein>
    <recommendedName>
        <fullName evidence="1">Carbamoyl phosphate synthase small chain</fullName>
        <ecNumber evidence="1">6.3.5.5</ecNumber>
    </recommendedName>
    <alternativeName>
        <fullName evidence="1">Carbamoyl phosphate synthetase glutamine chain</fullName>
    </alternativeName>
</protein>